<protein>
    <recommendedName>
        <fullName evidence="1">ATP synthase subunit delta</fullName>
    </recommendedName>
    <alternativeName>
        <fullName evidence="1">ATP synthase F(1) sector subunit delta</fullName>
    </alternativeName>
    <alternativeName>
        <fullName evidence="1">F-type ATPase subunit delta</fullName>
        <shortName evidence="1">F-ATPase subunit delta</shortName>
    </alternativeName>
</protein>
<organism>
    <name type="scientific">Streptococcus pneumoniae (strain ATCC BAA-255 / R6)</name>
    <dbReference type="NCBI Taxonomy" id="171101"/>
    <lineage>
        <taxon>Bacteria</taxon>
        <taxon>Bacillati</taxon>
        <taxon>Bacillota</taxon>
        <taxon>Bacilli</taxon>
        <taxon>Lactobacillales</taxon>
        <taxon>Streptococcaceae</taxon>
        <taxon>Streptococcus</taxon>
    </lineage>
</organism>
<sequence>MDKKTVKVIEKYSMPFVQLVLEKGEEDRIFSDLTQIKQVVEKTGLPSFLKQVAVDESDKEKTIAFFQDSVSPLLQNFIQVLAYNHRANLFYDVLVDCLNRLEKETNRFEVTITSAHPLTDEQKTRLLPLIEKKMSLKVRSVKEQIDESLIGGFVIFANHKTIDVSIKQQLKVVKENLK</sequence>
<gene>
    <name evidence="1" type="primary">atpH</name>
    <name type="synonym">atpX</name>
    <name type="ordered locus">spr1363</name>
</gene>
<comment type="function">
    <text evidence="1">F(1)F(0) ATP synthase produces ATP from ADP in the presence of a proton or sodium gradient. F-type ATPases consist of two structural domains, F(1) containing the extramembraneous catalytic core and F(0) containing the membrane proton channel, linked together by a central stalk and a peripheral stalk. During catalysis, ATP synthesis in the catalytic domain of F(1) is coupled via a rotary mechanism of the central stalk subunits to proton translocation.</text>
</comment>
<comment type="function">
    <text evidence="1">This protein is part of the stalk that links CF(0) to CF(1). It either transmits conformational changes from CF(0) to CF(1) or is implicated in proton conduction.</text>
</comment>
<comment type="subunit">
    <text evidence="1 2">F-type ATPases have 2 components, F(1) - the catalytic core - and F(0) - the membrane proton channel. F(1) has five subunits: alpha(3), beta(3), gamma(1), delta(1), epsilon(1). F(0) has three main subunits: a(1), b(2) and c(10-14). The alpha and beta chains form an alternating ring which encloses part of the gamma chain. F(1) is attached to F(0) by a central stalk formed by the gamma and epsilon chains, while a peripheral stalk is formed by the delta and b chains.</text>
</comment>
<comment type="subcellular location">
    <subcellularLocation>
        <location evidence="3">Cell membrane</location>
        <topology evidence="3">Peripheral membrane protein</topology>
    </subcellularLocation>
</comment>
<comment type="induction">
    <text evidence="2">Induced by a decrease in external pH from 7.5 to 5.7.</text>
</comment>
<comment type="similarity">
    <text evidence="1">Belongs to the ATPase delta chain family.</text>
</comment>
<proteinExistence type="evidence at protein level"/>
<reference key="1">
    <citation type="journal article" date="2001" name="Mol. Microbiol.">
        <title>The promoter of the operon encoding the F0F1 ATPase of Streptococcus pneumoniae is inducible by pH.</title>
        <authorList>
            <person name="Martin-Galiano A.J."/>
            <person name="Ferrandiz M.J."/>
            <person name="de la Campa A.G."/>
        </authorList>
    </citation>
    <scope>NUCLEOTIDE SEQUENCE [GENOMIC DNA]</scope>
    <scope>SUBUNIT</scope>
    <scope>SUBCELLULAR LOCATION</scope>
    <scope>INDUCTION</scope>
</reference>
<reference key="2">
    <citation type="journal article" date="2001" name="J. Bacteriol.">
        <title>Genome of the bacterium Streptococcus pneumoniae strain R6.</title>
        <authorList>
            <person name="Hoskins J."/>
            <person name="Alborn W.E. Jr."/>
            <person name="Arnold J."/>
            <person name="Blaszczak L.C."/>
            <person name="Burgett S."/>
            <person name="DeHoff B.S."/>
            <person name="Estrem S.T."/>
            <person name="Fritz L."/>
            <person name="Fu D.-J."/>
            <person name="Fuller W."/>
            <person name="Geringer C."/>
            <person name="Gilmour R."/>
            <person name="Glass J.S."/>
            <person name="Khoja H."/>
            <person name="Kraft A.R."/>
            <person name="Lagace R.E."/>
            <person name="LeBlanc D.J."/>
            <person name="Lee L.N."/>
            <person name="Lefkowitz E.J."/>
            <person name="Lu J."/>
            <person name="Matsushima P."/>
            <person name="McAhren S.M."/>
            <person name="McHenney M."/>
            <person name="McLeaster K."/>
            <person name="Mundy C.W."/>
            <person name="Nicas T.I."/>
            <person name="Norris F.H."/>
            <person name="O'Gara M."/>
            <person name="Peery R.B."/>
            <person name="Robertson G.T."/>
            <person name="Rockey P."/>
            <person name="Sun P.-M."/>
            <person name="Winkler M.E."/>
            <person name="Yang Y."/>
            <person name="Young-Bellido M."/>
            <person name="Zhao G."/>
            <person name="Zook C.A."/>
            <person name="Baltz R.H."/>
            <person name="Jaskunas S.R."/>
            <person name="Rosteck P.R. Jr."/>
            <person name="Skatrud P.L."/>
            <person name="Glass J.I."/>
        </authorList>
    </citation>
    <scope>NUCLEOTIDE SEQUENCE [LARGE SCALE GENOMIC DNA]</scope>
    <source>
        <strain>ATCC BAA-255 / R6</strain>
    </source>
</reference>
<accession>P0A2Z5</accession>
<accession>Q54785</accession>
<accession>Q7BDA9</accession>
<keyword id="KW-0066">ATP synthesis</keyword>
<keyword id="KW-1003">Cell membrane</keyword>
<keyword id="KW-0139">CF(1)</keyword>
<keyword id="KW-0375">Hydrogen ion transport</keyword>
<keyword id="KW-0406">Ion transport</keyword>
<keyword id="KW-0472">Membrane</keyword>
<keyword id="KW-1185">Reference proteome</keyword>
<keyword id="KW-0813">Transport</keyword>
<feature type="chain" id="PRO_0000193492" description="ATP synthase subunit delta">
    <location>
        <begin position="1"/>
        <end position="178"/>
    </location>
</feature>
<evidence type="ECO:0000255" key="1">
    <source>
        <dbReference type="HAMAP-Rule" id="MF_01416"/>
    </source>
</evidence>
<evidence type="ECO:0000269" key="2">
    <source>
    </source>
</evidence>
<evidence type="ECO:0000305" key="3">
    <source>
    </source>
</evidence>
<dbReference type="EMBL" id="AF368465">
    <property type="protein sequence ID" value="AAL66416.1"/>
    <property type="molecule type" value="Genomic_DNA"/>
</dbReference>
<dbReference type="EMBL" id="AE007317">
    <property type="protein sequence ID" value="AAL00167.1"/>
    <property type="molecule type" value="Genomic_DNA"/>
</dbReference>
<dbReference type="PIR" id="B98042">
    <property type="entry name" value="B98042"/>
</dbReference>
<dbReference type="RefSeq" id="NP_358956.1">
    <property type="nucleotide sequence ID" value="NC_003098.1"/>
</dbReference>
<dbReference type="RefSeq" id="WP_000359036.1">
    <property type="nucleotide sequence ID" value="NC_003098.1"/>
</dbReference>
<dbReference type="SMR" id="P0A2Z5"/>
<dbReference type="STRING" id="171101.spr1363"/>
<dbReference type="KEGG" id="spr:spr1363"/>
<dbReference type="PATRIC" id="fig|171101.6.peg.1477"/>
<dbReference type="eggNOG" id="COG0712">
    <property type="taxonomic scope" value="Bacteria"/>
</dbReference>
<dbReference type="HOGENOM" id="CLU_085114_1_2_9"/>
<dbReference type="Proteomes" id="UP000000586">
    <property type="component" value="Chromosome"/>
</dbReference>
<dbReference type="GO" id="GO:0005886">
    <property type="term" value="C:plasma membrane"/>
    <property type="evidence" value="ECO:0007669"/>
    <property type="project" value="UniProtKB-SubCell"/>
</dbReference>
<dbReference type="GO" id="GO:0045259">
    <property type="term" value="C:proton-transporting ATP synthase complex"/>
    <property type="evidence" value="ECO:0007669"/>
    <property type="project" value="UniProtKB-KW"/>
</dbReference>
<dbReference type="GO" id="GO:0046933">
    <property type="term" value="F:proton-transporting ATP synthase activity, rotational mechanism"/>
    <property type="evidence" value="ECO:0007669"/>
    <property type="project" value="UniProtKB-UniRule"/>
</dbReference>
<dbReference type="GO" id="GO:0015986">
    <property type="term" value="P:proton motive force-driven ATP synthesis"/>
    <property type="evidence" value="ECO:0000318"/>
    <property type="project" value="GO_Central"/>
</dbReference>
<dbReference type="Gene3D" id="1.10.520.20">
    <property type="entry name" value="N-terminal domain of the delta subunit of the F1F0-ATP synthase"/>
    <property type="match status" value="1"/>
</dbReference>
<dbReference type="HAMAP" id="MF_01416">
    <property type="entry name" value="ATP_synth_delta_bact"/>
    <property type="match status" value="1"/>
</dbReference>
<dbReference type="InterPro" id="IPR026015">
    <property type="entry name" value="ATP_synth_OSCP/delta_N_sf"/>
</dbReference>
<dbReference type="InterPro" id="IPR000711">
    <property type="entry name" value="ATPase_OSCP/dsu"/>
</dbReference>
<dbReference type="NCBIfam" id="TIGR01145">
    <property type="entry name" value="ATP_synt_delta"/>
    <property type="match status" value="1"/>
</dbReference>
<dbReference type="NCBIfam" id="NF004401">
    <property type="entry name" value="PRK05758.2-1"/>
    <property type="match status" value="1"/>
</dbReference>
<dbReference type="PANTHER" id="PTHR11910">
    <property type="entry name" value="ATP SYNTHASE DELTA CHAIN"/>
    <property type="match status" value="1"/>
</dbReference>
<dbReference type="Pfam" id="PF00213">
    <property type="entry name" value="OSCP"/>
    <property type="match status" value="1"/>
</dbReference>
<dbReference type="PRINTS" id="PR00125">
    <property type="entry name" value="ATPASEDELTA"/>
</dbReference>
<dbReference type="SUPFAM" id="SSF47928">
    <property type="entry name" value="N-terminal domain of the delta subunit of the F1F0-ATP synthase"/>
    <property type="match status" value="1"/>
</dbReference>
<name>ATPD_STRR6</name>